<name>CNPY1_DANRE</name>
<organism>
    <name type="scientific">Danio rerio</name>
    <name type="common">Zebrafish</name>
    <name type="synonym">Brachydanio rerio</name>
    <dbReference type="NCBI Taxonomy" id="7955"/>
    <lineage>
        <taxon>Eukaryota</taxon>
        <taxon>Metazoa</taxon>
        <taxon>Chordata</taxon>
        <taxon>Craniata</taxon>
        <taxon>Vertebrata</taxon>
        <taxon>Euteleostomi</taxon>
        <taxon>Actinopterygii</taxon>
        <taxon>Neopterygii</taxon>
        <taxon>Teleostei</taxon>
        <taxon>Ostariophysi</taxon>
        <taxon>Cypriniformes</taxon>
        <taxon>Danionidae</taxon>
        <taxon>Danioninae</taxon>
        <taxon>Danio</taxon>
    </lineage>
</organism>
<feature type="signal peptide" evidence="2">
    <location>
        <begin position="1"/>
        <end position="24"/>
    </location>
</feature>
<feature type="chain" id="PRO_0000314013" description="Protein canopy-1">
    <location>
        <begin position="25"/>
        <end position="187"/>
    </location>
</feature>
<feature type="domain" description="Saposin B-type">
    <location>
        <begin position="28"/>
        <end position="181"/>
    </location>
</feature>
<feature type="short sequence motif" description="Prevents secretion from ER" evidence="2">
    <location>
        <begin position="184"/>
        <end position="187"/>
    </location>
</feature>
<feature type="disulfide bond" evidence="1">
    <location>
        <begin position="32"/>
        <end position="177"/>
    </location>
</feature>
<feature type="disulfide bond" evidence="1">
    <location>
        <begin position="35"/>
        <end position="170"/>
    </location>
</feature>
<feature type="disulfide bond" evidence="1">
    <location>
        <begin position="90"/>
        <end position="143"/>
    </location>
</feature>
<feature type="mutagenesis site" description="Does not abolish endoplasmic reticulum localization." evidence="3">
    <original>HSEL</original>
    <variation>KDEL</variation>
    <location>
        <begin position="184"/>
        <end position="187"/>
    </location>
</feature>
<feature type="mutagenesis site" description="Abolishes endoplasmic reticulum localization." evidence="3">
    <location>
        <begin position="184"/>
        <end position="187"/>
    </location>
</feature>
<protein>
    <recommendedName>
        <fullName>Protein canopy-1</fullName>
    </recommendedName>
    <alternativeName>
        <fullName>Protein D121</fullName>
    </alternativeName>
</protein>
<accession>Q2L6L1</accession>
<accession>Q90ZG9</accession>
<gene>
    <name type="primary">cnpy1</name>
    <name type="synonym">d121</name>
    <name type="ORF">si:dkey-265a7.3</name>
</gene>
<dbReference type="EMBL" id="AB201383">
    <property type="protein sequence ID" value="BAE78824.1"/>
    <property type="molecule type" value="mRNA"/>
</dbReference>
<dbReference type="EMBL" id="BX510360">
    <property type="protein sequence ID" value="CAM46989.1"/>
    <property type="molecule type" value="Genomic_DNA"/>
</dbReference>
<dbReference type="EMBL" id="BC122425">
    <property type="protein sequence ID" value="AAI22426.1"/>
    <property type="molecule type" value="mRNA"/>
</dbReference>
<dbReference type="EMBL" id="AB055671">
    <property type="protein sequence ID" value="BAB62803.1"/>
    <property type="molecule type" value="mRNA"/>
</dbReference>
<dbReference type="RefSeq" id="NP_001034586.1">
    <property type="nucleotide sequence ID" value="NM_001039497.2"/>
</dbReference>
<dbReference type="SMR" id="Q2L6L1"/>
<dbReference type="FunCoup" id="Q2L6L1">
    <property type="interactions" value="216"/>
</dbReference>
<dbReference type="STRING" id="7955.ENSDARP00000009432"/>
<dbReference type="PaxDb" id="7955-ENSDARP00000009432"/>
<dbReference type="Ensembl" id="ENSDART00000020792">
    <property type="protein sequence ID" value="ENSDARP00000009432"/>
    <property type="gene ID" value="ENSDARG00000003757"/>
</dbReference>
<dbReference type="Ensembl" id="ENSDART00000163350">
    <property type="protein sequence ID" value="ENSDARP00000133952"/>
    <property type="gene ID" value="ENSDARG00000003757"/>
</dbReference>
<dbReference type="GeneID" id="402819"/>
<dbReference type="KEGG" id="dre:402819"/>
<dbReference type="AGR" id="ZFIN:ZDB-GENE-060315-3"/>
<dbReference type="CTD" id="285888"/>
<dbReference type="ZFIN" id="ZDB-GENE-060315-3">
    <property type="gene designation" value="cnpy1"/>
</dbReference>
<dbReference type="eggNOG" id="KOG3782">
    <property type="taxonomic scope" value="Eukaryota"/>
</dbReference>
<dbReference type="HOGENOM" id="CLU_095726_2_1_1"/>
<dbReference type="InParanoid" id="Q2L6L1"/>
<dbReference type="OMA" id="TVCERMN"/>
<dbReference type="OrthoDB" id="192915at2759"/>
<dbReference type="PhylomeDB" id="Q2L6L1"/>
<dbReference type="TreeFam" id="TF318578"/>
<dbReference type="PRO" id="PR:Q2L6L1"/>
<dbReference type="Proteomes" id="UP000000437">
    <property type="component" value="Chromosome 2"/>
</dbReference>
<dbReference type="Bgee" id="ENSDARG00000003757">
    <property type="expression patterns" value="Expressed in testis and 30 other cell types or tissues"/>
</dbReference>
<dbReference type="ExpressionAtlas" id="Q2L6L1">
    <property type="expression patterns" value="baseline and differential"/>
</dbReference>
<dbReference type="GO" id="GO:0005783">
    <property type="term" value="C:endoplasmic reticulum"/>
    <property type="evidence" value="ECO:0000314"/>
    <property type="project" value="ZFIN"/>
</dbReference>
<dbReference type="GO" id="GO:0007368">
    <property type="term" value="P:determination of left/right symmetry"/>
    <property type="evidence" value="ECO:0000315"/>
    <property type="project" value="ZFIN"/>
</dbReference>
<dbReference type="GO" id="GO:0008543">
    <property type="term" value="P:fibroblast growth factor receptor signaling pathway"/>
    <property type="evidence" value="ECO:0000316"/>
    <property type="project" value="ZFIN"/>
</dbReference>
<dbReference type="GO" id="GO:0070121">
    <property type="term" value="P:Kupffer's vesicle development"/>
    <property type="evidence" value="ECO:0000315"/>
    <property type="project" value="ZFIN"/>
</dbReference>
<dbReference type="GO" id="GO:0030917">
    <property type="term" value="P:midbrain-hindbrain boundary development"/>
    <property type="evidence" value="ECO:0000315"/>
    <property type="project" value="ZFIN"/>
</dbReference>
<dbReference type="GO" id="GO:0040036">
    <property type="term" value="P:regulation of fibroblast growth factor receptor signaling pathway"/>
    <property type="evidence" value="ECO:0000315"/>
    <property type="project" value="ZFIN"/>
</dbReference>
<dbReference type="InterPro" id="IPR042415">
    <property type="entry name" value="CNPY"/>
</dbReference>
<dbReference type="InterPro" id="IPR021852">
    <property type="entry name" value="DUF3456"/>
</dbReference>
<dbReference type="PANTHER" id="PTHR13341:SF4">
    <property type="entry name" value="CANOPY FGF SIGNALING REGULATOR 1"/>
    <property type="match status" value="1"/>
</dbReference>
<dbReference type="PANTHER" id="PTHR13341">
    <property type="entry name" value="MIR-INTERACTING SAPOSIN-LIKE PROTEIN"/>
    <property type="match status" value="1"/>
</dbReference>
<dbReference type="Pfam" id="PF11938">
    <property type="entry name" value="DUF3456"/>
    <property type="match status" value="1"/>
</dbReference>
<reference key="1">
    <citation type="journal article" date="2006" name="Curr. Biol.">
        <title>Canopy1, a novel regulator of FGF signaling around the midbrain-hindbrain boundary in zebrafish.</title>
        <authorList>
            <person name="Hirate Y."/>
            <person name="Okamoto H."/>
        </authorList>
    </citation>
    <scope>NUCLEOTIDE SEQUENCE [MRNA]</scope>
    <scope>FUNCTION</scope>
    <scope>SUBUNIT</scope>
    <scope>INTERACTION WITH FGFR1</scope>
    <scope>INDUCTION</scope>
    <scope>SUBCELLULAR LOCATION</scope>
    <scope>MUTAGENESIS OF 184-HIS--LEU-187</scope>
    <scope>DEVELOPMENTAL STAGE</scope>
</reference>
<reference key="2">
    <citation type="journal article" date="2013" name="Nature">
        <title>The zebrafish reference genome sequence and its relationship to the human genome.</title>
        <authorList>
            <person name="Howe K."/>
            <person name="Clark M.D."/>
            <person name="Torroja C.F."/>
            <person name="Torrance J."/>
            <person name="Berthelot C."/>
            <person name="Muffato M."/>
            <person name="Collins J.E."/>
            <person name="Humphray S."/>
            <person name="McLaren K."/>
            <person name="Matthews L."/>
            <person name="McLaren S."/>
            <person name="Sealy I."/>
            <person name="Caccamo M."/>
            <person name="Churcher C."/>
            <person name="Scott C."/>
            <person name="Barrett J.C."/>
            <person name="Koch R."/>
            <person name="Rauch G.J."/>
            <person name="White S."/>
            <person name="Chow W."/>
            <person name="Kilian B."/>
            <person name="Quintais L.T."/>
            <person name="Guerra-Assuncao J.A."/>
            <person name="Zhou Y."/>
            <person name="Gu Y."/>
            <person name="Yen J."/>
            <person name="Vogel J.H."/>
            <person name="Eyre T."/>
            <person name="Redmond S."/>
            <person name="Banerjee R."/>
            <person name="Chi J."/>
            <person name="Fu B."/>
            <person name="Langley E."/>
            <person name="Maguire S.F."/>
            <person name="Laird G.K."/>
            <person name="Lloyd D."/>
            <person name="Kenyon E."/>
            <person name="Donaldson S."/>
            <person name="Sehra H."/>
            <person name="Almeida-King J."/>
            <person name="Loveland J."/>
            <person name="Trevanion S."/>
            <person name="Jones M."/>
            <person name="Quail M."/>
            <person name="Willey D."/>
            <person name="Hunt A."/>
            <person name="Burton J."/>
            <person name="Sims S."/>
            <person name="McLay K."/>
            <person name="Plumb B."/>
            <person name="Davis J."/>
            <person name="Clee C."/>
            <person name="Oliver K."/>
            <person name="Clark R."/>
            <person name="Riddle C."/>
            <person name="Elliot D."/>
            <person name="Threadgold G."/>
            <person name="Harden G."/>
            <person name="Ware D."/>
            <person name="Begum S."/>
            <person name="Mortimore B."/>
            <person name="Kerry G."/>
            <person name="Heath P."/>
            <person name="Phillimore B."/>
            <person name="Tracey A."/>
            <person name="Corby N."/>
            <person name="Dunn M."/>
            <person name="Johnson C."/>
            <person name="Wood J."/>
            <person name="Clark S."/>
            <person name="Pelan S."/>
            <person name="Griffiths G."/>
            <person name="Smith M."/>
            <person name="Glithero R."/>
            <person name="Howden P."/>
            <person name="Barker N."/>
            <person name="Lloyd C."/>
            <person name="Stevens C."/>
            <person name="Harley J."/>
            <person name="Holt K."/>
            <person name="Panagiotidis G."/>
            <person name="Lovell J."/>
            <person name="Beasley H."/>
            <person name="Henderson C."/>
            <person name="Gordon D."/>
            <person name="Auger K."/>
            <person name="Wright D."/>
            <person name="Collins J."/>
            <person name="Raisen C."/>
            <person name="Dyer L."/>
            <person name="Leung K."/>
            <person name="Robertson L."/>
            <person name="Ambridge K."/>
            <person name="Leongamornlert D."/>
            <person name="McGuire S."/>
            <person name="Gilderthorp R."/>
            <person name="Griffiths C."/>
            <person name="Manthravadi D."/>
            <person name="Nichol S."/>
            <person name="Barker G."/>
            <person name="Whitehead S."/>
            <person name="Kay M."/>
            <person name="Brown J."/>
            <person name="Murnane C."/>
            <person name="Gray E."/>
            <person name="Humphries M."/>
            <person name="Sycamore N."/>
            <person name="Barker D."/>
            <person name="Saunders D."/>
            <person name="Wallis J."/>
            <person name="Babbage A."/>
            <person name="Hammond S."/>
            <person name="Mashreghi-Mohammadi M."/>
            <person name="Barr L."/>
            <person name="Martin S."/>
            <person name="Wray P."/>
            <person name="Ellington A."/>
            <person name="Matthews N."/>
            <person name="Ellwood M."/>
            <person name="Woodmansey R."/>
            <person name="Clark G."/>
            <person name="Cooper J."/>
            <person name="Tromans A."/>
            <person name="Grafham D."/>
            <person name="Skuce C."/>
            <person name="Pandian R."/>
            <person name="Andrews R."/>
            <person name="Harrison E."/>
            <person name="Kimberley A."/>
            <person name="Garnett J."/>
            <person name="Fosker N."/>
            <person name="Hall R."/>
            <person name="Garner P."/>
            <person name="Kelly D."/>
            <person name="Bird C."/>
            <person name="Palmer S."/>
            <person name="Gehring I."/>
            <person name="Berger A."/>
            <person name="Dooley C.M."/>
            <person name="Ersan-Urun Z."/>
            <person name="Eser C."/>
            <person name="Geiger H."/>
            <person name="Geisler M."/>
            <person name="Karotki L."/>
            <person name="Kirn A."/>
            <person name="Konantz J."/>
            <person name="Konantz M."/>
            <person name="Oberlander M."/>
            <person name="Rudolph-Geiger S."/>
            <person name="Teucke M."/>
            <person name="Lanz C."/>
            <person name="Raddatz G."/>
            <person name="Osoegawa K."/>
            <person name="Zhu B."/>
            <person name="Rapp A."/>
            <person name="Widaa S."/>
            <person name="Langford C."/>
            <person name="Yang F."/>
            <person name="Schuster S.C."/>
            <person name="Carter N.P."/>
            <person name="Harrow J."/>
            <person name="Ning Z."/>
            <person name="Herrero J."/>
            <person name="Searle S.M."/>
            <person name="Enright A."/>
            <person name="Geisler R."/>
            <person name="Plasterk R.H."/>
            <person name="Lee C."/>
            <person name="Westerfield M."/>
            <person name="de Jong P.J."/>
            <person name="Zon L.I."/>
            <person name="Postlethwait J.H."/>
            <person name="Nusslein-Volhard C."/>
            <person name="Hubbard T.J."/>
            <person name="Roest Crollius H."/>
            <person name="Rogers J."/>
            <person name="Stemple D.L."/>
        </authorList>
    </citation>
    <scope>NUCLEOTIDE SEQUENCE [LARGE SCALE GENOMIC DNA]</scope>
    <source>
        <strain>Tuebingen</strain>
    </source>
</reference>
<reference key="3">
    <citation type="submission" date="2006-08" db="EMBL/GenBank/DDBJ databases">
        <authorList>
            <consortium name="NIH - Zebrafish Gene Collection (ZGC) project"/>
        </authorList>
    </citation>
    <scope>NUCLEOTIDE SEQUENCE [LARGE SCALE MRNA]</scope>
    <source>
        <tissue>Liver</tissue>
    </source>
</reference>
<reference key="4">
    <citation type="submission" date="2001-02" db="EMBL/GenBank/DDBJ databases">
        <title>A systematic search for the downstream target genes of the midbrain-MHB reciprocal inductive signaling by ordered differential display revealed the expression of ephrin-A3 in the posterior tectum of zebrafish embryos.</title>
        <authorList>
            <person name="Hirate Y."/>
            <person name="Mieda M."/>
            <person name="Harada T."/>
            <person name="Yamasu K."/>
            <person name="Okamoto H."/>
        </authorList>
    </citation>
    <scope>NUCLEOTIDE SEQUENCE [MRNA] OF 101-187</scope>
</reference>
<comment type="function">
    <text evidence="3">Involved in the maintenance of the midbrain-hindbrain boundary (MHB) organizer. Contributes to a positive-feedback loop of FGF signaling in the MHB, enabling the MHB to exert its role as an organizer for the tectal and cerebellar development.</text>
</comment>
<comment type="subunit">
    <text evidence="3">Homodimer. Interacts with fgfr1.</text>
</comment>
<comment type="subcellular location">
    <subcellularLocation>
        <location evidence="3">Endoplasmic reticulum</location>
    </subcellularLocation>
</comment>
<comment type="developmental stage">
    <text evidence="3">Expressed maternally from early cleavage stages until the shield stage. Expressed zygotically in the polster at the bud stage. Expressed in the midbrain-hindbrain boundary (MHB) at 12 hours post-fertilization (hpf). Expressed in the tail bud and the mesenchymal cells of the caudal fin primordia at 26 hpf.</text>
</comment>
<comment type="induction">
    <text evidence="3">By the fibroblast growth factor fgf8 in the MHB.</text>
</comment>
<comment type="similarity">
    <text evidence="4">Belongs to the canopy family.</text>
</comment>
<proteinExistence type="evidence at protein level"/>
<keyword id="KW-0217">Developmental protein</keyword>
<keyword id="KW-1015">Disulfide bond</keyword>
<keyword id="KW-0256">Endoplasmic reticulum</keyword>
<keyword id="KW-1185">Reference proteome</keyword>
<keyword id="KW-0732">Signal</keyword>
<evidence type="ECO:0000250" key="1"/>
<evidence type="ECO:0000255" key="2"/>
<evidence type="ECO:0000269" key="3">
    <source>
    </source>
</evidence>
<evidence type="ECO:0000305" key="4"/>
<sequence length="187" mass="20973">MSPWIKHICLVLVAAFMLVKTTESKKDEALYCSACMAIADEINYSISQTDPKKMIHVGGFRLKPDGSLTDKKVPLARSETYLTELLEEVCKSMSDYALYENPDTKEKSYKRFAPRDNDGGNFPDFKNFKFDGPESSSALKFACESIVEELEDDIISLFASDSDHVAKTLCSEVSDHCKSSVFQHSEL</sequence>